<name>ID3A_XENLA</name>
<proteinExistence type="evidence at protein level"/>
<gene>
    <name type="primary">id3-a</name>
    <name evidence="21" type="synonym">id3</name>
</gene>
<organism>
    <name type="scientific">Xenopus laevis</name>
    <name type="common">African clawed frog</name>
    <dbReference type="NCBI Taxonomy" id="8355"/>
    <lineage>
        <taxon>Eukaryota</taxon>
        <taxon>Metazoa</taxon>
        <taxon>Chordata</taxon>
        <taxon>Craniata</taxon>
        <taxon>Vertebrata</taxon>
        <taxon>Euteleostomi</taxon>
        <taxon>Amphibia</taxon>
        <taxon>Batrachia</taxon>
        <taxon>Anura</taxon>
        <taxon>Pipoidea</taxon>
        <taxon>Pipidae</taxon>
        <taxon>Xenopodinae</taxon>
        <taxon>Xenopus</taxon>
        <taxon>Xenopus</taxon>
    </lineage>
</organism>
<reference evidence="17 18" key="1">
    <citation type="journal article" date="1995" name="Mech. Dev.">
        <title>XIdx, a dominant negative regulator of bHLH function in early Xenopus embryos.</title>
        <authorList>
            <person name="Wilson R."/>
            <person name="Mohun T."/>
        </authorList>
    </citation>
    <scope>NUCLEOTIDE SEQUENCE [GENOMIC DNA / MRNA]</scope>
    <scope>FUNCTION</scope>
    <scope>SUBUNIT</scope>
    <scope>TISSUE SPECIFICITY</scope>
    <scope>DEVELOPMENTAL STAGE</scope>
    <scope>MUTAGENESIS OF VAL-59</scope>
    <source>
        <tissue evidence="14">Neurula</tissue>
    </source>
</reference>
<reference evidence="17 19" key="2">
    <citation type="journal article" date="1995" name="Mech. Dev.">
        <title>Id gene activity during Xenopus embryogenesis.</title>
        <authorList>
            <person name="Zhang H."/>
            <person name="Reynaud S."/>
            <person name="Kloc M."/>
            <person name="Etkin L.D."/>
            <person name="Spohr G."/>
        </authorList>
    </citation>
    <scope>NUCLEOTIDE SEQUENCE [MRNA]</scope>
    <scope>FUNCTION</scope>
    <scope>TISSUE SPECIFICITY</scope>
    <scope>DEVELOPMENTAL STAGE</scope>
    <source>
        <tissue evidence="19">Neurula</tissue>
    </source>
</reference>
<reference evidence="21" key="3">
    <citation type="submission" date="2000-07" db="EMBL/GenBank/DDBJ databases">
        <authorList>
            <person name="Spohr G.B."/>
        </authorList>
    </citation>
    <scope>NUCLEOTIDE SEQUENCE [MRNA]</scope>
    <source>
        <tissue evidence="21">Neurula</tissue>
    </source>
</reference>
<reference evidence="21" key="4">
    <citation type="submission" date="2003-01" db="EMBL/GenBank/DDBJ databases">
        <authorList>
            <consortium name="NIH - Xenopus Gene Collection (XGC) project"/>
        </authorList>
    </citation>
    <scope>NUCLEOTIDE SEQUENCE [LARGE SCALE MRNA]</scope>
    <source>
        <tissue evidence="20">Embryo</tissue>
    </source>
</reference>
<reference evidence="17" key="5">
    <citation type="journal article" date="1999" name="Dev. Growth Differ.">
        <title>Expression of helix-loop-helix type negative regulators of differentiation during limb regeneration in urodeles and anurans.</title>
        <authorList>
            <person name="Shimizu-Nishikawa K."/>
            <person name="Tazawa I."/>
            <person name="Uchiyama K."/>
            <person name="Yoshizato K."/>
        </authorList>
    </citation>
    <scope>TISSUE SPECIFICITY</scope>
</reference>
<reference evidence="17" key="6">
    <citation type="journal article" date="1999" name="Mech. Dev.">
        <title>Localized XId3 mRNA activation in Xenopus embryos by cytoplasmic polyadenylation.</title>
        <authorList>
            <person name="Afouda A.B."/>
            <person name="Reynaud-Deonauth S."/>
            <person name="Mohun T."/>
            <person name="Spohr G."/>
        </authorList>
    </citation>
    <scope>TISSUE SPECIFICITY</scope>
    <scope>DEVELOPMENTAL STAGE</scope>
</reference>
<reference evidence="17" key="7">
    <citation type="journal article" date="2002" name="Differentiation">
        <title>Notch signaling is involved in the regulation of Id3 gene transcription during Xenopus embryogenesis.</title>
        <authorList>
            <person name="Reynaud-Deonauth S."/>
            <person name="Zhang H."/>
            <person name="Afouda A."/>
            <person name="Taillefert S."/>
            <person name="Beatus P."/>
            <person name="Kloc M."/>
            <person name="Etkin L.D."/>
            <person name="Fischer-Lougheed J."/>
            <person name="Spohr G."/>
        </authorList>
    </citation>
    <scope>INDUCTION</scope>
</reference>
<reference evidence="17" key="8">
    <citation type="journal article" date="2003" name="Dev. Biol.">
        <title>Cloning and characterization of Xenopus Id4 reveals differing roles for Id genes.</title>
        <authorList>
            <person name="Liu K.J."/>
            <person name="Harland R.M."/>
        </authorList>
    </citation>
    <scope>FUNCTION</scope>
    <scope>TISSUE SPECIFICITY</scope>
    <scope>DEVELOPMENTAL STAGE</scope>
    <scope>INDUCTION</scope>
</reference>
<reference evidence="17" key="9">
    <citation type="journal article" date="2005" name="Development">
        <title>Xenopus Id3 is required downstream of Myc for the formation of multipotent neural crest progenitor cells.</title>
        <authorList>
            <person name="Light W."/>
            <person name="Vernon A.E."/>
            <person name="Lasorella A."/>
            <person name="Iavarone A."/>
            <person name="LaBonne C."/>
        </authorList>
    </citation>
    <scope>FUNCTION</scope>
    <scope>TISSUE SPECIFICITY</scope>
    <scope>INDUCTION</scope>
</reference>
<reference evidence="17" key="10">
    <citation type="journal article" date="2005" name="Dev. Biol.">
        <title>Phylogenetic footprinting and genome scanning identify vertebrate BMP response elements and new target genes.</title>
        <authorList>
            <person name="von Bubnoff A."/>
            <person name="Peiffer D.A."/>
            <person name="Blitz I.L."/>
            <person name="Hayata T."/>
            <person name="Ogata S."/>
            <person name="Zeng Q."/>
            <person name="Trunnell M."/>
            <person name="Cho K.W."/>
        </authorList>
    </citation>
    <scope>INDUCTION</scope>
</reference>
<reference evidence="17" key="11">
    <citation type="journal article" date="2005" name="Genes Dev.">
        <title>To proliferate or to die: role of Id3 in cell cycle progression and survival of neural crest progenitors.</title>
        <authorList>
            <person name="Kee Y."/>
            <person name="Bronner-Fraser M."/>
        </authorList>
    </citation>
    <scope>FUNCTION</scope>
    <scope>TISSUE SPECIFICITY</scope>
</reference>
<reference evidence="17" key="12">
    <citation type="journal article" date="2008" name="Dev. Biol.">
        <title>Hairy2-Id3 interactions play an essential role in Xenopus neural crest progenitor specification.</title>
        <authorList>
            <person name="Nichane M."/>
            <person name="de Croze N."/>
            <person name="Ren X."/>
            <person name="Souopgui J."/>
            <person name="Monsoro-Burq A.H."/>
            <person name="Bellefroid E.J."/>
        </authorList>
    </citation>
    <scope>FUNCTION</scope>
    <scope>INTERACTION WITH HES4-B</scope>
    <scope>INDUCTION</scope>
</reference>
<reference evidence="17" key="13">
    <citation type="journal article" date="2008" name="Dev. Biol.">
        <title>Hairy2 functions through both DNA-binding and non DNA-binding mechanisms at the neural plate border in Xenopus.</title>
        <authorList>
            <person name="Nichane M."/>
            <person name="Ren X."/>
            <person name="Souopgui J."/>
            <person name="Bellefroid E.J."/>
        </authorList>
    </citation>
    <scope>FUNCTION</scope>
    <scope>INDUCTION</scope>
</reference>
<reference evidence="17" key="14">
    <citation type="journal article" date="2010" name="EMBO J.">
        <title>Self-regulation of Stat3 activity coordinates cell-cycle progression and neural crest specification.</title>
        <authorList>
            <person name="Nichane M."/>
            <person name="Ren X."/>
            <person name="Bellefroid E.J."/>
        </authorList>
    </citation>
    <scope>FUNCTION</scope>
    <scope>INTERACTION WITH STAT3</scope>
</reference>
<evidence type="ECO:0000250" key="1">
    <source>
        <dbReference type="UniProtKB" id="Q02535"/>
    </source>
</evidence>
<evidence type="ECO:0000255" key="2">
    <source>
        <dbReference type="PROSITE-ProRule" id="PRU00981"/>
    </source>
</evidence>
<evidence type="ECO:0000269" key="3">
    <source>
    </source>
</evidence>
<evidence type="ECO:0000269" key="4">
    <source>
    </source>
</evidence>
<evidence type="ECO:0000269" key="5">
    <source>
    </source>
</evidence>
<evidence type="ECO:0000269" key="6">
    <source>
    </source>
</evidence>
<evidence type="ECO:0000269" key="7">
    <source>
    </source>
</evidence>
<evidence type="ECO:0000269" key="8">
    <source>
    </source>
</evidence>
<evidence type="ECO:0000269" key="9">
    <source>
    </source>
</evidence>
<evidence type="ECO:0000269" key="10">
    <source>
    </source>
</evidence>
<evidence type="ECO:0000269" key="11">
    <source>
    </source>
</evidence>
<evidence type="ECO:0000269" key="12">
    <source>
    </source>
</evidence>
<evidence type="ECO:0000269" key="13">
    <source>
    </source>
</evidence>
<evidence type="ECO:0000269" key="14">
    <source>
    </source>
</evidence>
<evidence type="ECO:0000303" key="15">
    <source>
    </source>
</evidence>
<evidence type="ECO:0000303" key="16">
    <source>
    </source>
</evidence>
<evidence type="ECO:0000305" key="17"/>
<evidence type="ECO:0000312" key="18">
    <source>
        <dbReference type="EMBL" id="AAB34225.1"/>
    </source>
</evidence>
<evidence type="ECO:0000312" key="19">
    <source>
        <dbReference type="EMBL" id="AAB34946.1"/>
    </source>
</evidence>
<evidence type="ECO:0000312" key="20">
    <source>
        <dbReference type="EMBL" id="AAH44039.1"/>
    </source>
</evidence>
<evidence type="ECO:0000312" key="21">
    <source>
        <dbReference type="EMBL" id="CAC00501.1"/>
    </source>
</evidence>
<dbReference type="EMBL" id="S76880">
    <property type="protein sequence ID" value="AAB34225.1"/>
    <property type="molecule type" value="Genomic_DNA"/>
</dbReference>
<dbReference type="EMBL" id="S79007">
    <property type="protein sequence ID" value="AAB34946.1"/>
    <property type="molecule type" value="mRNA"/>
</dbReference>
<dbReference type="EMBL" id="AJ292558">
    <property type="protein sequence ID" value="CAC00501.1"/>
    <property type="molecule type" value="mRNA"/>
</dbReference>
<dbReference type="EMBL" id="BC044039">
    <property type="protein sequence ID" value="AAH44039.1"/>
    <property type="molecule type" value="mRNA"/>
</dbReference>
<dbReference type="PIR" id="I51278">
    <property type="entry name" value="I51278"/>
</dbReference>
<dbReference type="PIR" id="I51316">
    <property type="entry name" value="I51316"/>
</dbReference>
<dbReference type="RefSeq" id="NP_001079535.1">
    <property type="nucleotide sequence ID" value="NM_001086066.1"/>
</dbReference>
<dbReference type="RefSeq" id="XP_018100241.1">
    <property type="nucleotide sequence ID" value="XM_018244752.1"/>
</dbReference>
<dbReference type="SMR" id="Q91399"/>
<dbReference type="DNASU" id="379222"/>
<dbReference type="GeneID" id="379222"/>
<dbReference type="KEGG" id="xla:379222"/>
<dbReference type="AGR" id="Xenbase:XB-GENE-6256366"/>
<dbReference type="CTD" id="379222"/>
<dbReference type="Xenbase" id="XB-GENE-6256366">
    <property type="gene designation" value="id3.L"/>
</dbReference>
<dbReference type="OMA" id="CSKDERT"/>
<dbReference type="OrthoDB" id="10047910at2759"/>
<dbReference type="Proteomes" id="UP000186698">
    <property type="component" value="Chromosome 2L"/>
</dbReference>
<dbReference type="Bgee" id="379222">
    <property type="expression patterns" value="Expressed in gastrula and 18 other cell types or tissues"/>
</dbReference>
<dbReference type="GO" id="GO:0005737">
    <property type="term" value="C:cytoplasm"/>
    <property type="evidence" value="ECO:0007669"/>
    <property type="project" value="InterPro"/>
</dbReference>
<dbReference type="GO" id="GO:0005634">
    <property type="term" value="C:nucleus"/>
    <property type="evidence" value="ECO:0000318"/>
    <property type="project" value="GO_Central"/>
</dbReference>
<dbReference type="GO" id="GO:0043425">
    <property type="term" value="F:bHLH transcription factor binding"/>
    <property type="evidence" value="ECO:0000353"/>
    <property type="project" value="UniProtKB"/>
</dbReference>
<dbReference type="GO" id="GO:0046983">
    <property type="term" value="F:protein dimerization activity"/>
    <property type="evidence" value="ECO:0007669"/>
    <property type="project" value="InterPro"/>
</dbReference>
<dbReference type="GO" id="GO:0003714">
    <property type="term" value="F:transcription corepressor activity"/>
    <property type="evidence" value="ECO:0000318"/>
    <property type="project" value="GO_Central"/>
</dbReference>
<dbReference type="GO" id="GO:0032922">
    <property type="term" value="P:circadian regulation of gene expression"/>
    <property type="evidence" value="ECO:0007669"/>
    <property type="project" value="TreeGrafter"/>
</dbReference>
<dbReference type="GO" id="GO:0043392">
    <property type="term" value="P:negative regulation of DNA binding"/>
    <property type="evidence" value="ECO:0000314"/>
    <property type="project" value="UniProtKB"/>
</dbReference>
<dbReference type="GO" id="GO:0045892">
    <property type="term" value="P:negative regulation of DNA-templated transcription"/>
    <property type="evidence" value="ECO:0000250"/>
    <property type="project" value="UniProtKB"/>
</dbReference>
<dbReference type="GO" id="GO:0000122">
    <property type="term" value="P:negative regulation of transcription by RNA polymerase II"/>
    <property type="evidence" value="ECO:0000314"/>
    <property type="project" value="UniProtKB"/>
</dbReference>
<dbReference type="GO" id="GO:0014029">
    <property type="term" value="P:neural crest formation"/>
    <property type="evidence" value="ECO:0000315"/>
    <property type="project" value="UniProtKB"/>
</dbReference>
<dbReference type="GO" id="GO:0030182">
    <property type="term" value="P:neuron differentiation"/>
    <property type="evidence" value="ECO:0000318"/>
    <property type="project" value="GO_Central"/>
</dbReference>
<dbReference type="GO" id="GO:0051726">
    <property type="term" value="P:regulation of cell cycle"/>
    <property type="evidence" value="ECO:0000315"/>
    <property type="project" value="UniProtKB"/>
</dbReference>
<dbReference type="CDD" id="cd19693">
    <property type="entry name" value="bHLH_dnHLH_ID3"/>
    <property type="match status" value="1"/>
</dbReference>
<dbReference type="FunFam" id="4.10.280.10:FF:000039">
    <property type="entry name" value="DNA-binding protein inhibitor ID-3"/>
    <property type="match status" value="1"/>
</dbReference>
<dbReference type="Gene3D" id="4.10.280.10">
    <property type="entry name" value="Helix-loop-helix DNA-binding domain"/>
    <property type="match status" value="1"/>
</dbReference>
<dbReference type="InterPro" id="IPR011598">
    <property type="entry name" value="bHLH_dom"/>
</dbReference>
<dbReference type="InterPro" id="IPR026052">
    <property type="entry name" value="DNA-bd_prot-inh"/>
</dbReference>
<dbReference type="InterPro" id="IPR036638">
    <property type="entry name" value="HLH_DNA-bd_sf"/>
</dbReference>
<dbReference type="PANTHER" id="PTHR11723">
    <property type="entry name" value="DNA-BINDING PROTEIN INHIBITOR"/>
    <property type="match status" value="1"/>
</dbReference>
<dbReference type="PANTHER" id="PTHR11723:SF16">
    <property type="entry name" value="DNA-BINDING PROTEIN INHIBITOR ID-3"/>
    <property type="match status" value="1"/>
</dbReference>
<dbReference type="Pfam" id="PF00010">
    <property type="entry name" value="HLH"/>
    <property type="match status" value="1"/>
</dbReference>
<dbReference type="SMART" id="SM00353">
    <property type="entry name" value="HLH"/>
    <property type="match status" value="1"/>
</dbReference>
<dbReference type="SUPFAM" id="SSF47459">
    <property type="entry name" value="HLH, helix-loop-helix DNA-binding domain"/>
    <property type="match status" value="1"/>
</dbReference>
<dbReference type="PROSITE" id="PS50888">
    <property type="entry name" value="BHLH"/>
    <property type="match status" value="1"/>
</dbReference>
<accession>Q91399</accession>
<accession>Q91417</accession>
<protein>
    <recommendedName>
        <fullName evidence="1">DNA-binding protein inhibitor ID-3-A</fullName>
    </recommendedName>
    <alternativeName>
        <fullName evidence="15">Inhibitor of DNA binding 3</fullName>
        <shortName evidence="15">XId3</shortName>
        <shortName evidence="16">XIdI</shortName>
        <shortName evidence="19">XIdIa</shortName>
        <shortName evidence="16">XIdIb</shortName>
        <shortName evidence="18">XIdx</shortName>
    </alternativeName>
    <alternativeName>
        <fullName>Inhibitor of differentiation 3-A</fullName>
    </alternativeName>
</protein>
<keyword id="KW-0090">Biological rhythms</keyword>
<keyword id="KW-0217">Developmental protein</keyword>
<keyword id="KW-0539">Nucleus</keyword>
<keyword id="KW-1185">Reference proteome</keyword>
<keyword id="KW-0678">Repressor</keyword>
<keyword id="KW-0804">Transcription</keyword>
<keyword id="KW-0805">Transcription regulation</keyword>
<sequence length="118" mass="12857">MKAISPVRSMSSCYQAVCCLSEQSLSIARGSSHKGPGMDEPMGLLYDMNGCYSKLKELVPGIPQGSKLSQVEILQHVIDYIFDLQIVLGEDQQQSSILSLQKSDFSELATQGDTSVCH</sequence>
<feature type="chain" id="PRO_0000390724" description="DNA-binding protein inhibitor ID-3-A">
    <location>
        <begin position="1"/>
        <end position="118"/>
    </location>
</feature>
<feature type="domain" description="bHLH" evidence="2">
    <location>
        <begin position="32"/>
        <end position="84"/>
    </location>
</feature>
<feature type="mutagenesis site" description="Disrupts the helix-loop-helix structure. Reduces ability to inhibit bHLH complex formation." evidence="14">
    <original>V</original>
    <variation>N</variation>
    <location>
        <position position="59"/>
    </location>
</feature>
<feature type="sequence conflict" description="In Ref. 2; AAB34946 and 3; CAC00501." evidence="17" ref="2 3">
    <original>G</original>
    <variation>A</variation>
    <location>
        <position position="30"/>
    </location>
</feature>
<feature type="sequence conflict" description="In Ref. 2; AAB34946 and 3; CAC00501." evidence="17" ref="2 3">
    <original>G</original>
    <variation>A</variation>
    <location>
        <position position="65"/>
    </location>
</feature>
<comment type="function">
    <text evidence="6 7 8 10 11 12 13 14">Transcriptional regulator (lacking a basic DNA binding domain) which negatively regulates the basic helix-loop-helix (bHLH) transcription factors by forming heterodimers and inhibiting their DNA binding and transcriptional activity. Influences cell fate decisions in the embryo by sequestering and blocking the activity of the bHLH transcription factors that control these decisions. Inhibits the binding of myogenic bHLH-containing complexes to E-box DNA, thereby preventing activation of muscle-specific target genes. Also inhibits the activity of neurogenic factor neurod1/neuroD. Plays a role in cell cycle progression and survival of neural crest progenitors; binding to either hes4-B/hairy2b or stat3 blocks the formation of transcription factor complexes and the repressor function of hes4-B/hairy2B, to allow neural crest progenitors to differentiate. May play a role in the regulation of the circadian rhythm.</text>
</comment>
<comment type="subunit">
    <text evidence="1 11 12 14">Homodimer (By similarity). Heterodimer with other HLH proteins. Interacts (via HLH domain) with the bHLH protein hes4/hairy2 (via Orange domain). Interacts with stat3.</text>
</comment>
<comment type="subcellular location">
    <subcellularLocation>
        <location evidence="1 2">Nucleus</location>
    </subcellularLocation>
</comment>
<comment type="tissue specificity">
    <text evidence="3 4 6 7 8 13 14">At gastrula stage, expressed in all three germ layers, but becomes localized to discrete domains of the developing nervous system during neurulation, including the anterior neural plate, cement gland, eye anlagen, otic placode and both cranial and trunk premigratory and early migratory neural crest cells. Also expressed in the most dorsal and ventral portions of the myotome, the developing heart and anterior blood islets, and in the tail fin mesenchyme. Expressed at a low level in limbs, with expression decreasing as limbs develop, but expressed at a high level in blastemas (regenerated limbs), where expression is localized to both the blastermal epidermis and mesenchyme. Widely expressed in adults including the liver and heart.</text>
</comment>
<comment type="developmental stage">
    <text evidence="3 6 13 14">Expressed both maternally and zygotically. Expressed at a low level in fertilized eggs and cleaving embryos. Zygotic expression begins after the midblastula transition (MBT) with expression levels rising during gastrulation, and remaining constant throughout neurulation and premetamorphic development. Also expressed in adults.</text>
</comment>
<comment type="induction">
    <text evidence="5 6 8 9 10 11">By bmp and notch signaling, and in response to signaling events of early neural crest induction. Repressed by hes4/hairy2 in a DNA-binding dependent manner through repression of bmp4 transcription, but up-regulated by hes4/hairy2 acting via delta1 activation. By myc.</text>
</comment>